<sequence>MHEVRVLAFQKIYSIDINQSAMDDIFDIFSIEDKGLDIENESIKSFYSSLVNGTFNNLEYIDSLIKDISWNWSLDRMDKVDLAILRMGVYSLKFQNFENSKRALIDEAILIAKKYGSKNSDKFINGILDALLKNMENCIEKK</sequence>
<feature type="chain" id="PRO_0000265492" description="Transcription antitermination protein NusB">
    <location>
        <begin position="1"/>
        <end position="142"/>
    </location>
</feature>
<gene>
    <name evidence="1" type="primary">nusB</name>
    <name type="ordered locus">BG0108</name>
</gene>
<protein>
    <recommendedName>
        <fullName evidence="1">Transcription antitermination protein NusB</fullName>
    </recommendedName>
    <alternativeName>
        <fullName evidence="1">Antitermination factor NusB</fullName>
    </alternativeName>
</protein>
<accession>Q662Q5</accession>
<proteinExistence type="inferred from homology"/>
<evidence type="ECO:0000255" key="1">
    <source>
        <dbReference type="HAMAP-Rule" id="MF_00073"/>
    </source>
</evidence>
<organism>
    <name type="scientific">Borrelia garinii subsp. bavariensis (strain ATCC BAA-2496 / DSM 23469 / PBi)</name>
    <name type="common">Borreliella bavariensis</name>
    <dbReference type="NCBI Taxonomy" id="290434"/>
    <lineage>
        <taxon>Bacteria</taxon>
        <taxon>Pseudomonadati</taxon>
        <taxon>Spirochaetota</taxon>
        <taxon>Spirochaetia</taxon>
        <taxon>Spirochaetales</taxon>
        <taxon>Borreliaceae</taxon>
        <taxon>Borreliella</taxon>
    </lineage>
</organism>
<dbReference type="EMBL" id="CP000013">
    <property type="protein sequence ID" value="AAU06966.1"/>
    <property type="molecule type" value="Genomic_DNA"/>
</dbReference>
<dbReference type="RefSeq" id="WP_011193459.1">
    <property type="nucleotide sequence ID" value="NZ_CP028872.1"/>
</dbReference>
<dbReference type="SMR" id="Q662Q5"/>
<dbReference type="GeneID" id="45160903"/>
<dbReference type="KEGG" id="bga:BG0108"/>
<dbReference type="eggNOG" id="COG0781">
    <property type="taxonomic scope" value="Bacteria"/>
</dbReference>
<dbReference type="HOGENOM" id="CLU_087843_3_1_12"/>
<dbReference type="OrthoDB" id="9811381at2"/>
<dbReference type="Proteomes" id="UP000002276">
    <property type="component" value="Chromosome"/>
</dbReference>
<dbReference type="GO" id="GO:0005829">
    <property type="term" value="C:cytosol"/>
    <property type="evidence" value="ECO:0007669"/>
    <property type="project" value="TreeGrafter"/>
</dbReference>
<dbReference type="GO" id="GO:0003723">
    <property type="term" value="F:RNA binding"/>
    <property type="evidence" value="ECO:0007669"/>
    <property type="project" value="UniProtKB-UniRule"/>
</dbReference>
<dbReference type="GO" id="GO:0006353">
    <property type="term" value="P:DNA-templated transcription termination"/>
    <property type="evidence" value="ECO:0007669"/>
    <property type="project" value="UniProtKB-UniRule"/>
</dbReference>
<dbReference type="GO" id="GO:0031564">
    <property type="term" value="P:transcription antitermination"/>
    <property type="evidence" value="ECO:0007669"/>
    <property type="project" value="UniProtKB-KW"/>
</dbReference>
<dbReference type="CDD" id="cd00619">
    <property type="entry name" value="Terminator_NusB"/>
    <property type="match status" value="1"/>
</dbReference>
<dbReference type="Gene3D" id="1.10.940.10">
    <property type="entry name" value="NusB-like"/>
    <property type="match status" value="1"/>
</dbReference>
<dbReference type="HAMAP" id="MF_00073">
    <property type="entry name" value="NusB"/>
    <property type="match status" value="1"/>
</dbReference>
<dbReference type="InterPro" id="IPR035926">
    <property type="entry name" value="NusB-like_sf"/>
</dbReference>
<dbReference type="InterPro" id="IPR011605">
    <property type="entry name" value="NusB_fam"/>
</dbReference>
<dbReference type="InterPro" id="IPR006027">
    <property type="entry name" value="NusB_RsmB_TIM44"/>
</dbReference>
<dbReference type="NCBIfam" id="TIGR01951">
    <property type="entry name" value="nusB"/>
    <property type="match status" value="1"/>
</dbReference>
<dbReference type="PANTHER" id="PTHR11078:SF3">
    <property type="entry name" value="ANTITERMINATION NUSB DOMAIN-CONTAINING PROTEIN"/>
    <property type="match status" value="1"/>
</dbReference>
<dbReference type="PANTHER" id="PTHR11078">
    <property type="entry name" value="N UTILIZATION SUBSTANCE PROTEIN B-RELATED"/>
    <property type="match status" value="1"/>
</dbReference>
<dbReference type="Pfam" id="PF01029">
    <property type="entry name" value="NusB"/>
    <property type="match status" value="1"/>
</dbReference>
<dbReference type="SUPFAM" id="SSF48013">
    <property type="entry name" value="NusB-like"/>
    <property type="match status" value="1"/>
</dbReference>
<comment type="function">
    <text evidence="1">Involved in transcription antitermination. Required for transcription of ribosomal RNA (rRNA) genes. Binds specifically to the boxA antiterminator sequence of the ribosomal RNA (rrn) operons.</text>
</comment>
<comment type="similarity">
    <text evidence="1">Belongs to the NusB family.</text>
</comment>
<name>NUSB_BORGP</name>
<reference key="1">
    <citation type="journal article" date="2004" name="Nucleic Acids Res.">
        <title>Comparative analysis of the Borrelia garinii genome.</title>
        <authorList>
            <person name="Gloeckner G."/>
            <person name="Lehmann R."/>
            <person name="Romualdi A."/>
            <person name="Pradella S."/>
            <person name="Schulte-Spechtel U."/>
            <person name="Schilhabel M."/>
            <person name="Wilske B."/>
            <person name="Suehnel J."/>
            <person name="Platzer M."/>
        </authorList>
    </citation>
    <scope>NUCLEOTIDE SEQUENCE [LARGE SCALE GENOMIC DNA]</scope>
    <source>
        <strain>ATCC BAA-2496 / DSM 23469 / PBi</strain>
    </source>
</reference>
<keyword id="KW-0694">RNA-binding</keyword>
<keyword id="KW-0804">Transcription</keyword>
<keyword id="KW-0889">Transcription antitermination</keyword>
<keyword id="KW-0805">Transcription regulation</keyword>